<comment type="function">
    <text evidence="1">Catalyzes the first step in the biosynthesis of ornithine lipids, which are phosphorus-free membrane lipids. Catalyzes the 3-hydroxyacyl-acyl carrier protein-dependent acylation of ornithine to form lyso-ornithine lipid (LOL).</text>
</comment>
<comment type="catalytic activity">
    <reaction evidence="1">
        <text>a (3R)-hydroxyacyl-[ACP] + L-ornithine = a lyso-ornithine lipid + holo-[ACP] + H(+)</text>
        <dbReference type="Rhea" id="RHEA:20633"/>
        <dbReference type="Rhea" id="RHEA-COMP:9685"/>
        <dbReference type="Rhea" id="RHEA-COMP:9945"/>
        <dbReference type="ChEBI" id="CHEBI:15378"/>
        <dbReference type="ChEBI" id="CHEBI:46911"/>
        <dbReference type="ChEBI" id="CHEBI:64479"/>
        <dbReference type="ChEBI" id="CHEBI:78827"/>
        <dbReference type="ChEBI" id="CHEBI:138482"/>
        <dbReference type="EC" id="2.3.2.30"/>
    </reaction>
    <physiologicalReaction direction="left-to-right" evidence="1">
        <dbReference type="Rhea" id="RHEA:20634"/>
    </physiologicalReaction>
</comment>
<comment type="pathway">
    <text evidence="1">Lipid metabolism.</text>
</comment>
<comment type="disruption phenotype">
    <text evidence="1">Deletion of the gene abrogates lyso-ornithine lipid and ornithine lipid synthesis. It does not affect resistance to bactericidal peptides or permeability of the outer membrane. Does not influence pro-inflammatory responses or the ability to multiply intracellularly and generate chronic infections.</text>
</comment>
<comment type="similarity">
    <text evidence="3">Belongs to the acetyltransferase family. OlsB subfamily.</text>
</comment>
<keyword id="KW-0012">Acyltransferase</keyword>
<keyword id="KW-0444">Lipid biosynthesis</keyword>
<keyword id="KW-0443">Lipid metabolism</keyword>
<keyword id="KW-1185">Reference proteome</keyword>
<keyword id="KW-0808">Transferase</keyword>
<sequence length="281" mass="31730">MSGLEAQQALFASNGDAIILGRIGSLEVRLANSRAAIQAAQELRFRVFFEEMGARKETIEAVEQRDADRFDTICDHLLVYDTALPVPEHQQIVGTYRLMRNEQAEKALGFYSADEYDVQRLKLSRPNLRLLELGRSCVKPEYRSKRTVELLWQGAWAYCRRHSIDVMFGCASFHGAVPAAHALGLSFLHHNCRATDDWDVRALPHRYQAMDLMPKEAINNKVALFSMPPLVKGYLRLGAMIGDGAVIDEAFGTTDVFIILPIERISSRYISYYGAEANRFV</sequence>
<name>OLSB_BRUA2</name>
<accession>Q2YNY9</accession>
<dbReference type="EC" id="2.3.2.30" evidence="1"/>
<dbReference type="EMBL" id="AM040264">
    <property type="protein sequence ID" value="CAJ10103.1"/>
    <property type="molecule type" value="Genomic_DNA"/>
</dbReference>
<dbReference type="STRING" id="359391.BAB1_0147"/>
<dbReference type="KEGG" id="bmf:BAB1_0147"/>
<dbReference type="PATRIC" id="fig|359391.4.peg.155"/>
<dbReference type="HOGENOM" id="CLU_058962_1_1_5"/>
<dbReference type="Proteomes" id="UP000002719">
    <property type="component" value="Chromosome I"/>
</dbReference>
<dbReference type="GO" id="GO:0043810">
    <property type="term" value="F:ornithine-acyl [acyl carrier protein] N-acyltransferase activity"/>
    <property type="evidence" value="ECO:0007669"/>
    <property type="project" value="UniProtKB-EC"/>
</dbReference>
<dbReference type="GO" id="GO:0006629">
    <property type="term" value="P:lipid metabolic process"/>
    <property type="evidence" value="ECO:0007669"/>
    <property type="project" value="UniProtKB-KW"/>
</dbReference>
<dbReference type="Gene3D" id="3.40.630.30">
    <property type="match status" value="1"/>
</dbReference>
<dbReference type="InterPro" id="IPR016181">
    <property type="entry name" value="Acyl_CoA_acyltransferase"/>
</dbReference>
<dbReference type="InterPro" id="IPR052351">
    <property type="entry name" value="Ornithine_N-alpha-AT"/>
</dbReference>
<dbReference type="PANTHER" id="PTHR37323">
    <property type="entry name" value="GCN5-RELATED N-ACETYLTRANSFERASE"/>
    <property type="match status" value="1"/>
</dbReference>
<dbReference type="PANTHER" id="PTHR37323:SF1">
    <property type="entry name" value="L-ORNITHINE N(ALPHA)-ACYLTRANSFERASE"/>
    <property type="match status" value="1"/>
</dbReference>
<dbReference type="Pfam" id="PF13444">
    <property type="entry name" value="Acetyltransf_5"/>
    <property type="match status" value="1"/>
</dbReference>
<dbReference type="SUPFAM" id="SSF55729">
    <property type="entry name" value="Acyl-CoA N-acyltransferases (Nat)"/>
    <property type="match status" value="1"/>
</dbReference>
<protein>
    <recommendedName>
        <fullName evidence="3">L-ornithine N(alpha)-acyltransferase</fullName>
        <ecNumber evidence="1">2.3.2.30</ecNumber>
    </recommendedName>
</protein>
<organism>
    <name type="scientific">Brucella abortus (strain 2308)</name>
    <dbReference type="NCBI Taxonomy" id="359391"/>
    <lineage>
        <taxon>Bacteria</taxon>
        <taxon>Pseudomonadati</taxon>
        <taxon>Pseudomonadota</taxon>
        <taxon>Alphaproteobacteria</taxon>
        <taxon>Hyphomicrobiales</taxon>
        <taxon>Brucellaceae</taxon>
        <taxon>Brucella/Ochrobactrum group</taxon>
        <taxon>Brucella</taxon>
    </lineage>
</organism>
<proteinExistence type="evidence at protein level"/>
<evidence type="ECO:0000269" key="1">
    <source>
    </source>
</evidence>
<evidence type="ECO:0000303" key="2">
    <source>
    </source>
</evidence>
<evidence type="ECO:0000305" key="3"/>
<evidence type="ECO:0000312" key="4">
    <source>
        <dbReference type="EMBL" id="CAJ10103.1"/>
    </source>
</evidence>
<reference key="1">
    <citation type="journal article" date="2005" name="Infect. Immun.">
        <title>Whole-genome analyses of speciation events in pathogenic Brucellae.</title>
        <authorList>
            <person name="Chain P.S."/>
            <person name="Comerci D.J."/>
            <person name="Tolmasky M.E."/>
            <person name="Larimer F.W."/>
            <person name="Malfatti S.A."/>
            <person name="Vergez L.M."/>
            <person name="Aguero F."/>
            <person name="Land M.L."/>
            <person name="Ugalde R.A."/>
            <person name="Garcia E."/>
        </authorList>
    </citation>
    <scope>NUCLEOTIDE SEQUENCE [LARGE SCALE GENOMIC DNA]</scope>
    <source>
        <strain>2308</strain>
    </source>
</reference>
<reference key="2">
    <citation type="journal article" date="2011" name="PLoS ONE">
        <title>Brucella abortus ornithine lipids are dispensable outer membrane components devoid of a marked pathogen-associated molecular pattern.</title>
        <authorList>
            <person name="Palacios-Chaves L."/>
            <person name="Conde-Alvarez R."/>
            <person name="Gil-Ramirez Y."/>
            <person name="Zuniga-Ripa A."/>
            <person name="Barquero-Calvo E."/>
            <person name="Chacon-Diaz C."/>
            <person name="Chaves-Olarte E."/>
            <person name="Arce-Gorvel V."/>
            <person name="Gorvel J.P."/>
            <person name="Moreno E."/>
            <person name="de Miguel M.J."/>
            <person name="Grillo M.J."/>
            <person name="Moriyon I."/>
            <person name="Iriarte M."/>
        </authorList>
    </citation>
    <scope>FUNCTION</scope>
    <scope>CATALYTIC ACTIVITY</scope>
    <scope>PATHWAY</scope>
    <scope>DISRUPTION PHENOTYPE</scope>
    <source>
        <strain>2308</strain>
    </source>
</reference>
<feature type="chain" id="PRO_0000452111" description="L-ornithine N(alpha)-acyltransferase">
    <location>
        <begin position="1"/>
        <end position="281"/>
    </location>
</feature>
<gene>
    <name evidence="2" type="primary">olsB</name>
    <name evidence="4" type="ordered locus">BAB1_0147</name>
</gene>